<dbReference type="EC" id="2.4.2.21" evidence="1"/>
<dbReference type="EMBL" id="CP000026">
    <property type="protein sequence ID" value="AAV76843.1"/>
    <property type="molecule type" value="Genomic_DNA"/>
</dbReference>
<dbReference type="RefSeq" id="WP_001193974.1">
    <property type="nucleotide sequence ID" value="NC_006511.1"/>
</dbReference>
<dbReference type="SMR" id="Q5PDU9"/>
<dbReference type="KEGG" id="spt:SPA0855"/>
<dbReference type="HOGENOM" id="CLU_002982_0_0_6"/>
<dbReference type="UniPathway" id="UPA00061">
    <property type="reaction ID" value="UER00516"/>
</dbReference>
<dbReference type="Proteomes" id="UP000008185">
    <property type="component" value="Chromosome"/>
</dbReference>
<dbReference type="GO" id="GO:0008939">
    <property type="term" value="F:nicotinate-nucleotide-dimethylbenzimidazole phosphoribosyltransferase activity"/>
    <property type="evidence" value="ECO:0007669"/>
    <property type="project" value="UniProtKB-UniRule"/>
</dbReference>
<dbReference type="GO" id="GO:0009236">
    <property type="term" value="P:cobalamin biosynthetic process"/>
    <property type="evidence" value="ECO:0007669"/>
    <property type="project" value="UniProtKB-KW"/>
</dbReference>
<dbReference type="CDD" id="cd02439">
    <property type="entry name" value="DMB-PRT_CobT"/>
    <property type="match status" value="1"/>
</dbReference>
<dbReference type="FunFam" id="1.10.1610.10:FF:000001">
    <property type="entry name" value="Nicotinate-nucleotide--dimethylbenzimidazole phosphoribosyltransferase"/>
    <property type="match status" value="1"/>
</dbReference>
<dbReference type="FunFam" id="3.40.50.10210:FF:000001">
    <property type="entry name" value="Nicotinate-nucleotide--dimethylbenzimidazole phosphoribosyltransferase"/>
    <property type="match status" value="1"/>
</dbReference>
<dbReference type="Gene3D" id="1.10.1610.10">
    <property type="match status" value="1"/>
</dbReference>
<dbReference type="Gene3D" id="3.40.50.10210">
    <property type="match status" value="1"/>
</dbReference>
<dbReference type="HAMAP" id="MF_00230">
    <property type="entry name" value="CobT"/>
    <property type="match status" value="1"/>
</dbReference>
<dbReference type="InterPro" id="IPR003200">
    <property type="entry name" value="Nict_dMeBzImd_PRibTrfase"/>
</dbReference>
<dbReference type="InterPro" id="IPR017846">
    <property type="entry name" value="Nict_dMeBzImd_PRibTrfase_bact"/>
</dbReference>
<dbReference type="InterPro" id="IPR023195">
    <property type="entry name" value="Nict_dMeBzImd_PRibTrfase_N"/>
</dbReference>
<dbReference type="InterPro" id="IPR036087">
    <property type="entry name" value="Nict_dMeBzImd_PRibTrfase_sf"/>
</dbReference>
<dbReference type="NCBIfam" id="TIGR03160">
    <property type="entry name" value="cobT_DBIPRT"/>
    <property type="match status" value="1"/>
</dbReference>
<dbReference type="NCBIfam" id="NF000996">
    <property type="entry name" value="PRK00105.1"/>
    <property type="match status" value="1"/>
</dbReference>
<dbReference type="PANTHER" id="PTHR43463">
    <property type="entry name" value="NICOTINATE-NUCLEOTIDE--DIMETHYLBENZIMIDAZOLE PHOSPHORIBOSYLTRANSFERASE"/>
    <property type="match status" value="1"/>
</dbReference>
<dbReference type="PANTHER" id="PTHR43463:SF1">
    <property type="entry name" value="NICOTINATE-NUCLEOTIDE--DIMETHYLBENZIMIDAZOLE PHOSPHORIBOSYLTRANSFERASE"/>
    <property type="match status" value="1"/>
</dbReference>
<dbReference type="Pfam" id="PF02277">
    <property type="entry name" value="DBI_PRT"/>
    <property type="match status" value="1"/>
</dbReference>
<dbReference type="SUPFAM" id="SSF52733">
    <property type="entry name" value="Nicotinate mononucleotide:5,6-dimethylbenzimidazole phosphoribosyltransferase (CobT)"/>
    <property type="match status" value="1"/>
</dbReference>
<evidence type="ECO:0000255" key="1">
    <source>
        <dbReference type="HAMAP-Rule" id="MF_00230"/>
    </source>
</evidence>
<accession>Q5PDU9</accession>
<proteinExistence type="inferred from homology"/>
<organism>
    <name type="scientific">Salmonella paratyphi A (strain ATCC 9150 / SARB42)</name>
    <dbReference type="NCBI Taxonomy" id="295319"/>
    <lineage>
        <taxon>Bacteria</taxon>
        <taxon>Pseudomonadati</taxon>
        <taxon>Pseudomonadota</taxon>
        <taxon>Gammaproteobacteria</taxon>
        <taxon>Enterobacterales</taxon>
        <taxon>Enterobacteriaceae</taxon>
        <taxon>Salmonella</taxon>
    </lineage>
</organism>
<name>COBT_SALPA</name>
<gene>
    <name evidence="1" type="primary">cobT</name>
    <name type="ordered locus">SPA0855</name>
</gene>
<sequence length="356" mass="36511">MQTLHALLRDIPAPDAEAMARAQQHIDGLLKPPGSLGRLETLAVQLAGMPGLNGTPQVGEKAVLVMCADHGVWDEGVAVSPKIVTAIQAANMTQGTTGVCVLAAQAGAKVHVIDVGIDAEPIPGVVDMRVARGCGNIAVGPAMSRSQAEALLLEVSRYTCDLAKRGVTLFGVGELGMANTTPAAAMVSVFTGSDAKEVVGIGANLPPSRIDNKVDVVRRAIAINQPNPRDGIDVLSKVGGVDLVGMTGVMLGAARCGLPVLLDGFLSYSAALAACQIAPAVRPYLIPSHFSAEKGARIALAHLSMEPYLHMAMRLGEGSGAALAMPIVEAACAMFHNMGELAASNIVLPEGNANAT</sequence>
<reference key="1">
    <citation type="journal article" date="2004" name="Nat. Genet.">
        <title>Comparison of genome degradation in Paratyphi A and Typhi, human-restricted serovars of Salmonella enterica that cause typhoid.</title>
        <authorList>
            <person name="McClelland M."/>
            <person name="Sanderson K.E."/>
            <person name="Clifton S.W."/>
            <person name="Latreille P."/>
            <person name="Porwollik S."/>
            <person name="Sabo A."/>
            <person name="Meyer R."/>
            <person name="Bieri T."/>
            <person name="Ozersky P."/>
            <person name="McLellan M."/>
            <person name="Harkins C.R."/>
            <person name="Wang C."/>
            <person name="Nguyen C."/>
            <person name="Berghoff A."/>
            <person name="Elliott G."/>
            <person name="Kohlberg S."/>
            <person name="Strong C."/>
            <person name="Du F."/>
            <person name="Carter J."/>
            <person name="Kremizki C."/>
            <person name="Layman D."/>
            <person name="Leonard S."/>
            <person name="Sun H."/>
            <person name="Fulton L."/>
            <person name="Nash W."/>
            <person name="Miner T."/>
            <person name="Minx P."/>
            <person name="Delehaunty K."/>
            <person name="Fronick C."/>
            <person name="Magrini V."/>
            <person name="Nhan M."/>
            <person name="Warren W."/>
            <person name="Florea L."/>
            <person name="Spieth J."/>
            <person name="Wilson R.K."/>
        </authorList>
    </citation>
    <scope>NUCLEOTIDE SEQUENCE [LARGE SCALE GENOMIC DNA]</scope>
    <source>
        <strain>ATCC 9150 / SARB42</strain>
    </source>
</reference>
<keyword id="KW-0169">Cobalamin biosynthesis</keyword>
<keyword id="KW-0328">Glycosyltransferase</keyword>
<keyword id="KW-0808">Transferase</keyword>
<protein>
    <recommendedName>
        <fullName evidence="1">Nicotinate-nucleotide--dimethylbenzimidazole phosphoribosyltransferase</fullName>
        <shortName evidence="1">NN:DBI PRT</shortName>
        <ecNumber evidence="1">2.4.2.21</ecNumber>
    </recommendedName>
    <alternativeName>
        <fullName evidence="1">N(1)-alpha-phosphoribosyltransferase</fullName>
    </alternativeName>
</protein>
<comment type="function">
    <text evidence="1">Catalyzes the synthesis of alpha-ribazole-5'-phosphate from nicotinate mononucleotide (NAMN) and 5,6-dimethylbenzimidazole (DMB).</text>
</comment>
<comment type="catalytic activity">
    <reaction evidence="1">
        <text>5,6-dimethylbenzimidazole + nicotinate beta-D-ribonucleotide = alpha-ribazole 5'-phosphate + nicotinate + H(+)</text>
        <dbReference type="Rhea" id="RHEA:11196"/>
        <dbReference type="ChEBI" id="CHEBI:15378"/>
        <dbReference type="ChEBI" id="CHEBI:15890"/>
        <dbReference type="ChEBI" id="CHEBI:32544"/>
        <dbReference type="ChEBI" id="CHEBI:57502"/>
        <dbReference type="ChEBI" id="CHEBI:57918"/>
        <dbReference type="EC" id="2.4.2.21"/>
    </reaction>
</comment>
<comment type="pathway">
    <text evidence="1">Nucleoside biosynthesis; alpha-ribazole biosynthesis; alpha-ribazole from 5,6-dimethylbenzimidazole: step 1/2.</text>
</comment>
<comment type="subunit">
    <text evidence="1">Homodimer.</text>
</comment>
<comment type="similarity">
    <text evidence="1">Belongs to the CobT family.</text>
</comment>
<feature type="chain" id="PRO_1000021623" description="Nicotinate-nucleotide--dimethylbenzimidazole phosphoribosyltransferase">
    <location>
        <begin position="1"/>
        <end position="356"/>
    </location>
</feature>
<feature type="active site" description="Proton acceptor" evidence="1">
    <location>
        <position position="317"/>
    </location>
</feature>